<keyword id="KW-0456">Lyase</keyword>
<comment type="catalytic activity">
    <reaction evidence="1">
        <text>(4aS,6R)-4a-hydroxy-L-erythro-5,6,7,8-tetrahydrobiopterin = (6R)-L-erythro-6,7-dihydrobiopterin + H2O</text>
        <dbReference type="Rhea" id="RHEA:11920"/>
        <dbReference type="ChEBI" id="CHEBI:15377"/>
        <dbReference type="ChEBI" id="CHEBI:15642"/>
        <dbReference type="ChEBI" id="CHEBI:43120"/>
        <dbReference type="EC" id="4.2.1.96"/>
    </reaction>
</comment>
<comment type="similarity">
    <text evidence="1">Belongs to the pterin-4-alpha-carbinolamine dehydratase family.</text>
</comment>
<sequence length="97" mass="11054">MARNRLTESEMNEALRALDGWQKVDGREAITRSFKFKDFSTAFGFMAQAALYAEKLDHHPEWFNAYNRVDVTLATHSENGVTELDIKMARKMNAIAG</sequence>
<protein>
    <recommendedName>
        <fullName evidence="1">Putative pterin-4-alpha-carbinolamine dehydratase</fullName>
        <shortName evidence="1">PHS</shortName>
        <ecNumber evidence="1">4.2.1.96</ecNumber>
    </recommendedName>
    <alternativeName>
        <fullName evidence="1">4-alpha-hydroxy-tetrahydropterin dehydratase</fullName>
    </alternativeName>
    <alternativeName>
        <fullName evidence="1">Pterin carbinolamine dehydratase</fullName>
        <shortName evidence="1">PCD</shortName>
    </alternativeName>
</protein>
<evidence type="ECO:0000255" key="1">
    <source>
        <dbReference type="HAMAP-Rule" id="MF_00434"/>
    </source>
</evidence>
<reference key="1">
    <citation type="submission" date="2009-03" db="EMBL/GenBank/DDBJ databases">
        <title>Brucella melitensis ATCC 23457 whole genome shotgun sequencing project.</title>
        <authorList>
            <person name="Setubal J.C."/>
            <person name="Boyle S."/>
            <person name="Crasta O.R."/>
            <person name="Gillespie J.J."/>
            <person name="Kenyon R.W."/>
            <person name="Lu J."/>
            <person name="Mane S."/>
            <person name="Nagrani S."/>
            <person name="Shallom J.M."/>
            <person name="Shallom S."/>
            <person name="Shukla M."/>
            <person name="Snyder E.E."/>
            <person name="Sobral B.W."/>
            <person name="Wattam A.R."/>
            <person name="Will R."/>
            <person name="Williams K."/>
            <person name="Yoo H."/>
            <person name="Munk C."/>
            <person name="Tapia R."/>
            <person name="Han C."/>
            <person name="Detter J.C."/>
            <person name="Bruce D."/>
            <person name="Brettin T.S."/>
        </authorList>
    </citation>
    <scope>NUCLEOTIDE SEQUENCE [LARGE SCALE GENOMIC DNA]</scope>
    <source>
        <strain>ATCC 23457</strain>
    </source>
</reference>
<organism>
    <name type="scientific">Brucella melitensis biotype 2 (strain ATCC 23457)</name>
    <dbReference type="NCBI Taxonomy" id="546272"/>
    <lineage>
        <taxon>Bacteria</taxon>
        <taxon>Pseudomonadati</taxon>
        <taxon>Pseudomonadota</taxon>
        <taxon>Alphaproteobacteria</taxon>
        <taxon>Hyphomicrobiales</taxon>
        <taxon>Brucellaceae</taxon>
        <taxon>Brucella/Ochrobactrum group</taxon>
        <taxon>Brucella</taxon>
    </lineage>
</organism>
<gene>
    <name type="ordered locus">BMEA_A0085</name>
</gene>
<proteinExistence type="inferred from homology"/>
<feature type="chain" id="PRO_1000134946" description="Putative pterin-4-alpha-carbinolamine dehydratase">
    <location>
        <begin position="1"/>
        <end position="97"/>
    </location>
</feature>
<dbReference type="EC" id="4.2.1.96" evidence="1"/>
<dbReference type="EMBL" id="CP001488">
    <property type="protein sequence ID" value="ACN99899.1"/>
    <property type="molecule type" value="Genomic_DNA"/>
</dbReference>
<dbReference type="RefSeq" id="WP_002965330.1">
    <property type="nucleotide sequence ID" value="NC_012441.1"/>
</dbReference>
<dbReference type="SMR" id="C0RGE2"/>
<dbReference type="KEGG" id="bmi:BMEA_A0085"/>
<dbReference type="HOGENOM" id="CLU_081974_3_2_5"/>
<dbReference type="Proteomes" id="UP000001748">
    <property type="component" value="Chromosome I"/>
</dbReference>
<dbReference type="GO" id="GO:0008124">
    <property type="term" value="F:4-alpha-hydroxytetrahydrobiopterin dehydratase activity"/>
    <property type="evidence" value="ECO:0007669"/>
    <property type="project" value="UniProtKB-UniRule"/>
</dbReference>
<dbReference type="GO" id="GO:0006729">
    <property type="term" value="P:tetrahydrobiopterin biosynthetic process"/>
    <property type="evidence" value="ECO:0007669"/>
    <property type="project" value="InterPro"/>
</dbReference>
<dbReference type="CDD" id="cd00914">
    <property type="entry name" value="PCD_DCoH_subfamily_b"/>
    <property type="match status" value="1"/>
</dbReference>
<dbReference type="Gene3D" id="3.30.1360.20">
    <property type="entry name" value="Transcriptional coactivator/pterin dehydratase"/>
    <property type="match status" value="1"/>
</dbReference>
<dbReference type="HAMAP" id="MF_00434">
    <property type="entry name" value="Pterin_4_alpha"/>
    <property type="match status" value="1"/>
</dbReference>
<dbReference type="InterPro" id="IPR036428">
    <property type="entry name" value="PCD_sf"/>
</dbReference>
<dbReference type="InterPro" id="IPR001533">
    <property type="entry name" value="Pterin_deHydtase"/>
</dbReference>
<dbReference type="NCBIfam" id="NF002017">
    <property type="entry name" value="PRK00823.1-2"/>
    <property type="match status" value="1"/>
</dbReference>
<dbReference type="NCBIfam" id="NF002018">
    <property type="entry name" value="PRK00823.1-3"/>
    <property type="match status" value="1"/>
</dbReference>
<dbReference type="PANTHER" id="PTHR12599">
    <property type="entry name" value="PTERIN-4-ALPHA-CARBINOLAMINE DEHYDRATASE"/>
    <property type="match status" value="1"/>
</dbReference>
<dbReference type="PANTHER" id="PTHR12599:SF0">
    <property type="entry name" value="PTERIN-4-ALPHA-CARBINOLAMINE DEHYDRATASE"/>
    <property type="match status" value="1"/>
</dbReference>
<dbReference type="Pfam" id="PF01329">
    <property type="entry name" value="Pterin_4a"/>
    <property type="match status" value="1"/>
</dbReference>
<dbReference type="SUPFAM" id="SSF55248">
    <property type="entry name" value="PCD-like"/>
    <property type="match status" value="1"/>
</dbReference>
<accession>C0RGE2</accession>
<name>PHS_BRUMB</name>